<organism>
    <name type="scientific">Methanoculleus marisnigri (strain ATCC 35101 / DSM 1498 / JR1)</name>
    <dbReference type="NCBI Taxonomy" id="368407"/>
    <lineage>
        <taxon>Archaea</taxon>
        <taxon>Methanobacteriati</taxon>
        <taxon>Methanobacteriota</taxon>
        <taxon>Stenosarchaea group</taxon>
        <taxon>Methanomicrobia</taxon>
        <taxon>Methanomicrobiales</taxon>
        <taxon>Methanomicrobiaceae</taxon>
        <taxon>Methanoculleus</taxon>
    </lineage>
</organism>
<sequence>MVEAEDLQSLKTIALLGGCRGPIWLSSQSLGSVLGISPQTASRRLIALERQQFVTRSMKPDGQYVAVTREGEQALKREYADYVRIFNPDQRGYTLTGTVISGLGEGRYYMSIPHYKEQFGGCLGFEPFPGTLNIRLDAASIAVRKHLDHAGWIDVPGFTADDRTFGGARVLPCLIRGYRCAIVVPSRTHYPEDTIEVIAGCELRKALNLNDNDTIEVEITHD</sequence>
<accession>A3CY32</accession>
<protein>
    <recommendedName>
        <fullName>Riboflavin kinase</fullName>
        <shortName>RFK</shortName>
        <ecNumber>2.7.1.161</ecNumber>
    </recommendedName>
    <alternativeName>
        <fullName>CTP-dependent riboflavin kinase</fullName>
    </alternativeName>
    <alternativeName>
        <fullName>CTP:riboflavin 5'-phosphotransferase</fullName>
    </alternativeName>
    <alternativeName>
        <fullName>Flavokinase</fullName>
    </alternativeName>
</protein>
<evidence type="ECO:0000250" key="1"/>
<evidence type="ECO:0000305" key="2"/>
<gene>
    <name type="primary">ribK</name>
    <name type="ordered locus">Memar_2359</name>
</gene>
<proteinExistence type="inferred from homology"/>
<reference key="1">
    <citation type="journal article" date="2009" name="Stand. Genomic Sci.">
        <title>Complete genome sequence of Methanoculleus marisnigri Romesser et al. 1981 type strain JR1.</title>
        <authorList>
            <person name="Anderson I.J."/>
            <person name="Sieprawska-Lupa M."/>
            <person name="Lapidus A."/>
            <person name="Nolan M."/>
            <person name="Copeland A."/>
            <person name="Glavina Del Rio T."/>
            <person name="Tice H."/>
            <person name="Dalin E."/>
            <person name="Barry K."/>
            <person name="Saunders E."/>
            <person name="Han C."/>
            <person name="Brettin T."/>
            <person name="Detter J.C."/>
            <person name="Bruce D."/>
            <person name="Mikhailova N."/>
            <person name="Pitluck S."/>
            <person name="Hauser L."/>
            <person name="Land M."/>
            <person name="Lucas S."/>
            <person name="Richardson P."/>
            <person name="Whitman W.B."/>
            <person name="Kyrpides N.C."/>
        </authorList>
    </citation>
    <scope>NUCLEOTIDE SEQUENCE [LARGE SCALE GENOMIC DNA]</scope>
    <source>
        <strain>ATCC 35101 / DSM 1498 / JR1</strain>
    </source>
</reference>
<name>RIFK_METMJ</name>
<dbReference type="EC" id="2.7.1.161"/>
<dbReference type="EMBL" id="CP000562">
    <property type="protein sequence ID" value="ABN58282.1"/>
    <property type="molecule type" value="Genomic_DNA"/>
</dbReference>
<dbReference type="RefSeq" id="WP_011845191.1">
    <property type="nucleotide sequence ID" value="NC_009051.1"/>
</dbReference>
<dbReference type="SMR" id="A3CY32"/>
<dbReference type="STRING" id="368407.Memar_2359"/>
<dbReference type="GeneID" id="4846861"/>
<dbReference type="KEGG" id="mem:Memar_2359"/>
<dbReference type="eggNOG" id="arCOG01904">
    <property type="taxonomic scope" value="Archaea"/>
</dbReference>
<dbReference type="HOGENOM" id="CLU_088476_0_0_2"/>
<dbReference type="OrthoDB" id="30955at2157"/>
<dbReference type="UniPathway" id="UPA00276">
    <property type="reaction ID" value="UER00929"/>
</dbReference>
<dbReference type="Proteomes" id="UP000002146">
    <property type="component" value="Chromosome"/>
</dbReference>
<dbReference type="GO" id="GO:0000287">
    <property type="term" value="F:magnesium ion binding"/>
    <property type="evidence" value="ECO:0007669"/>
    <property type="project" value="UniProtKB-UniRule"/>
</dbReference>
<dbReference type="GO" id="GO:0000166">
    <property type="term" value="F:nucleotide binding"/>
    <property type="evidence" value="ECO:0007669"/>
    <property type="project" value="UniProtKB-UniRule"/>
</dbReference>
<dbReference type="GO" id="GO:0008531">
    <property type="term" value="F:riboflavin kinase activity"/>
    <property type="evidence" value="ECO:0007669"/>
    <property type="project" value="InterPro"/>
</dbReference>
<dbReference type="GO" id="GO:0009398">
    <property type="term" value="P:FMN biosynthetic process"/>
    <property type="evidence" value="ECO:0007669"/>
    <property type="project" value="UniProtKB-UniRule"/>
</dbReference>
<dbReference type="GO" id="GO:0009231">
    <property type="term" value="P:riboflavin biosynthetic process"/>
    <property type="evidence" value="ECO:0007669"/>
    <property type="project" value="InterPro"/>
</dbReference>
<dbReference type="Gene3D" id="2.40.30.30">
    <property type="entry name" value="Riboflavin kinase-like"/>
    <property type="match status" value="1"/>
</dbReference>
<dbReference type="Gene3D" id="1.10.10.10">
    <property type="entry name" value="Winged helix-like DNA-binding domain superfamily/Winged helix DNA-binding domain"/>
    <property type="match status" value="1"/>
</dbReference>
<dbReference type="HAMAP" id="MF_01285">
    <property type="entry name" value="Riboflavin_kinase"/>
    <property type="match status" value="1"/>
</dbReference>
<dbReference type="InterPro" id="IPR039063">
    <property type="entry name" value="RibK_CTP-dep"/>
</dbReference>
<dbReference type="InterPro" id="IPR023470">
    <property type="entry name" value="Riboflavin_kinase_archaeal"/>
</dbReference>
<dbReference type="InterPro" id="IPR023602">
    <property type="entry name" value="Riboflavin_kinase_CTP-dep"/>
</dbReference>
<dbReference type="InterPro" id="IPR023465">
    <property type="entry name" value="Riboflavin_kinase_dom_sf"/>
</dbReference>
<dbReference type="InterPro" id="IPR036388">
    <property type="entry name" value="WH-like_DNA-bd_sf"/>
</dbReference>
<dbReference type="InterPro" id="IPR036390">
    <property type="entry name" value="WH_DNA-bd_sf"/>
</dbReference>
<dbReference type="PANTHER" id="PTHR40706">
    <property type="entry name" value="RIBOFLAVIN KINASE"/>
    <property type="match status" value="1"/>
</dbReference>
<dbReference type="PANTHER" id="PTHR40706:SF1">
    <property type="entry name" value="RIBOFLAVIN KINASE"/>
    <property type="match status" value="1"/>
</dbReference>
<dbReference type="Pfam" id="PF01982">
    <property type="entry name" value="CTP-dep_RFKase"/>
    <property type="match status" value="1"/>
</dbReference>
<dbReference type="SUPFAM" id="SSF82114">
    <property type="entry name" value="Riboflavin kinase-like"/>
    <property type="match status" value="1"/>
</dbReference>
<dbReference type="SUPFAM" id="SSF46785">
    <property type="entry name" value="Winged helix' DNA-binding domain"/>
    <property type="match status" value="1"/>
</dbReference>
<comment type="function">
    <text evidence="1">Catalyzes the CTP-dependent phosphorylation of riboflavin (vitamin B2) to form flavin mononucleotide (FMN).</text>
</comment>
<comment type="catalytic activity">
    <reaction>
        <text>riboflavin + CTP = CDP + FMN + H(+)</text>
        <dbReference type="Rhea" id="RHEA:25021"/>
        <dbReference type="ChEBI" id="CHEBI:15378"/>
        <dbReference type="ChEBI" id="CHEBI:37563"/>
        <dbReference type="ChEBI" id="CHEBI:57986"/>
        <dbReference type="ChEBI" id="CHEBI:58069"/>
        <dbReference type="ChEBI" id="CHEBI:58210"/>
        <dbReference type="EC" id="2.7.1.161"/>
    </reaction>
</comment>
<comment type="cofactor">
    <cofactor evidence="1">
        <name>Mg(2+)</name>
        <dbReference type="ChEBI" id="CHEBI:18420"/>
    </cofactor>
    <text evidence="1">Binds 1 Mg(2+) ion per subunit.</text>
</comment>
<comment type="pathway">
    <text>Cofactor biosynthesis; FMN biosynthesis; FMN from riboflavin (CTP route): step 1/1.</text>
</comment>
<comment type="similarity">
    <text evidence="2">Belongs to the archaeal riboflavin kinase family.</text>
</comment>
<feature type="chain" id="PRO_0000322094" description="Riboflavin kinase">
    <location>
        <begin position="1"/>
        <end position="222"/>
    </location>
</feature>
<feature type="region of interest" description="Unknown">
    <location>
        <begin position="1"/>
        <end position="92"/>
    </location>
</feature>
<feature type="region of interest" description="Riboflavin kinase">
    <location>
        <begin position="93"/>
        <end position="222"/>
    </location>
</feature>
<feature type="binding site" evidence="1">
    <location>
        <begin position="102"/>
        <end position="107"/>
    </location>
    <ligand>
        <name>CDP</name>
        <dbReference type="ChEBI" id="CHEBI:58069"/>
    </ligand>
</feature>
<feature type="binding site" evidence="1">
    <location>
        <position position="131"/>
    </location>
    <ligand>
        <name>Mg(2+)</name>
        <dbReference type="ChEBI" id="CHEBI:18420"/>
    </ligand>
</feature>
<feature type="binding site" evidence="1">
    <location>
        <position position="133"/>
    </location>
    <ligand>
        <name>Mg(2+)</name>
        <dbReference type="ChEBI" id="CHEBI:18420"/>
    </ligand>
</feature>
<feature type="binding site" evidence="1">
    <location>
        <position position="188"/>
    </location>
    <ligand>
        <name>FMN</name>
        <dbReference type="ChEBI" id="CHEBI:58210"/>
    </ligand>
</feature>
<feature type="binding site" evidence="1">
    <location>
        <position position="196"/>
    </location>
    <ligand>
        <name>FMN</name>
        <dbReference type="ChEBI" id="CHEBI:58210"/>
    </ligand>
</feature>
<feature type="binding site" evidence="1">
    <location>
        <begin position="201"/>
        <end position="204"/>
    </location>
    <ligand>
        <name>CDP</name>
        <dbReference type="ChEBI" id="CHEBI:58069"/>
    </ligand>
</feature>
<keyword id="KW-0285">Flavoprotein</keyword>
<keyword id="KW-0288">FMN</keyword>
<keyword id="KW-0418">Kinase</keyword>
<keyword id="KW-0460">Magnesium</keyword>
<keyword id="KW-0479">Metal-binding</keyword>
<keyword id="KW-0547">Nucleotide-binding</keyword>
<keyword id="KW-0808">Transferase</keyword>